<comment type="function">
    <text evidence="1 2 3">Catalyzes the hydrolysis of futalosine (FL) to dehypoxanthine futalosine (DHFL) and hypoxanthine, a step in the biosynthesis of menaquinone (MK, vitamin K2). Is highly specific to futalosine since it does not accept aminodeoxyfutalosine (AFL), or any structurally related nucleotides and nucleosides as substrate.</text>
</comment>
<comment type="catalytic activity">
    <reaction evidence="1 2 3">
        <text>futalosine + H2O = dehypoxanthine futalosine + hypoxanthine</text>
        <dbReference type="Rhea" id="RHEA:25904"/>
        <dbReference type="ChEBI" id="CHEBI:15377"/>
        <dbReference type="ChEBI" id="CHEBI:17368"/>
        <dbReference type="ChEBI" id="CHEBI:58863"/>
        <dbReference type="ChEBI" id="CHEBI:58864"/>
        <dbReference type="EC" id="3.2.2.26"/>
    </reaction>
</comment>
<comment type="activity regulation">
    <text evidence="3">No enhancing of inhibitory effects are observed with divalent metal ions. Slightly inhibited by hypoxanthine.</text>
</comment>
<comment type="biophysicochemical properties">
    <kinetics>
        <KM evidence="3">154 uM for futalosine</KM>
        <text>kcat is 1.02 sec(-1).</text>
    </kinetics>
    <phDependence>
        <text evidence="3">Optimum pH is 4.5.</text>
    </phDependence>
    <temperatureDependence>
        <text evidence="3">Optimum temperature is 80 degrees Celsius.</text>
    </temperatureDependence>
</comment>
<comment type="pathway">
    <text evidence="1 3">Quinol/quinone metabolism; menaquinone biosynthesis.</text>
</comment>
<comment type="subunit">
    <text evidence="3">Homotetramer.</text>
</comment>
<comment type="similarity">
    <text evidence="1">Belongs to the PNP/UDP phosphorylase family. Futalosine hydrolase subfamily.</text>
</comment>
<feature type="chain" id="PRO_0000418619" description="Futalosine hydrolase">
    <location>
        <begin position="1"/>
        <end position="225"/>
    </location>
</feature>
<name>MQNB_THET8</name>
<protein>
    <recommendedName>
        <fullName evidence="1">Futalosine hydrolase</fullName>
        <shortName evidence="1">FL hydrolase</shortName>
        <ecNumber evidence="1">3.2.2.26</ecNumber>
    </recommendedName>
    <alternativeName>
        <fullName evidence="1">Futalosine nucleosidase</fullName>
    </alternativeName>
    <alternativeName>
        <fullName evidence="1">Menaquinone biosynthetic enzyme MqnB</fullName>
    </alternativeName>
</protein>
<organism>
    <name type="scientific">Thermus thermophilus (strain ATCC 27634 / DSM 579 / HB8)</name>
    <dbReference type="NCBI Taxonomy" id="300852"/>
    <lineage>
        <taxon>Bacteria</taxon>
        <taxon>Thermotogati</taxon>
        <taxon>Deinococcota</taxon>
        <taxon>Deinococci</taxon>
        <taxon>Thermales</taxon>
        <taxon>Thermaceae</taxon>
        <taxon>Thermus</taxon>
    </lineage>
</organism>
<accession>Q5SKT7</accession>
<evidence type="ECO:0000255" key="1">
    <source>
        <dbReference type="HAMAP-Rule" id="MF_00991"/>
    </source>
</evidence>
<evidence type="ECO:0000269" key="2">
    <source>
    </source>
</evidence>
<evidence type="ECO:0000269" key="3">
    <source>
    </source>
</evidence>
<dbReference type="EC" id="3.2.2.26" evidence="1"/>
<dbReference type="EMBL" id="AB447892">
    <property type="protein sequence ID" value="BAG71678.1"/>
    <property type="molecule type" value="Genomic_DNA"/>
</dbReference>
<dbReference type="EMBL" id="AP008226">
    <property type="protein sequence ID" value="BAD70379.1"/>
    <property type="molecule type" value="Genomic_DNA"/>
</dbReference>
<dbReference type="RefSeq" id="WP_011228023.1">
    <property type="nucleotide sequence ID" value="NC_006461.1"/>
</dbReference>
<dbReference type="RefSeq" id="YP_143822.1">
    <property type="nucleotide sequence ID" value="NC_006461.1"/>
</dbReference>
<dbReference type="SMR" id="Q5SKT7"/>
<dbReference type="EnsemblBacteria" id="BAD70379">
    <property type="protein sequence ID" value="BAD70379"/>
    <property type="gene ID" value="BAD70379"/>
</dbReference>
<dbReference type="GeneID" id="3169130"/>
<dbReference type="KEGG" id="ttj:TTHA0556"/>
<dbReference type="PATRIC" id="fig|300852.9.peg.555"/>
<dbReference type="eggNOG" id="COG0775">
    <property type="taxonomic scope" value="Bacteria"/>
</dbReference>
<dbReference type="HOGENOM" id="CLU_031248_3_0_0"/>
<dbReference type="BioCyc" id="MetaCyc:MONOMER-14264"/>
<dbReference type="BRENDA" id="3.2.2.26">
    <property type="organism ID" value="2305"/>
</dbReference>
<dbReference type="UniPathway" id="UPA00079"/>
<dbReference type="Proteomes" id="UP000000532">
    <property type="component" value="Chromosome"/>
</dbReference>
<dbReference type="GO" id="GO:0005829">
    <property type="term" value="C:cytosol"/>
    <property type="evidence" value="ECO:0007669"/>
    <property type="project" value="TreeGrafter"/>
</dbReference>
<dbReference type="GO" id="GO:0008782">
    <property type="term" value="F:adenosylhomocysteine nucleosidase activity"/>
    <property type="evidence" value="ECO:0007669"/>
    <property type="project" value="TreeGrafter"/>
</dbReference>
<dbReference type="GO" id="GO:0016799">
    <property type="term" value="F:hydrolase activity, hydrolyzing N-glycosyl compounds"/>
    <property type="evidence" value="ECO:0000314"/>
    <property type="project" value="UniProtKB"/>
</dbReference>
<dbReference type="GO" id="GO:0008930">
    <property type="term" value="F:methylthioadenosine nucleosidase activity"/>
    <property type="evidence" value="ECO:0007669"/>
    <property type="project" value="TreeGrafter"/>
</dbReference>
<dbReference type="GO" id="GO:0019284">
    <property type="term" value="P:L-methionine salvage from S-adenosylmethionine"/>
    <property type="evidence" value="ECO:0007669"/>
    <property type="project" value="TreeGrafter"/>
</dbReference>
<dbReference type="GO" id="GO:0009234">
    <property type="term" value="P:menaquinone biosynthetic process"/>
    <property type="evidence" value="ECO:0000314"/>
    <property type="project" value="UniProtKB"/>
</dbReference>
<dbReference type="GO" id="GO:0009116">
    <property type="term" value="P:nucleoside metabolic process"/>
    <property type="evidence" value="ECO:0007669"/>
    <property type="project" value="InterPro"/>
</dbReference>
<dbReference type="Gene3D" id="3.40.50.1580">
    <property type="entry name" value="Nucleoside phosphorylase domain"/>
    <property type="match status" value="1"/>
</dbReference>
<dbReference type="HAMAP" id="MF_00991">
    <property type="entry name" value="MqnB"/>
    <property type="match status" value="1"/>
</dbReference>
<dbReference type="InterPro" id="IPR019963">
    <property type="entry name" value="FL_hydrolase_MqnB"/>
</dbReference>
<dbReference type="InterPro" id="IPR000845">
    <property type="entry name" value="Nucleoside_phosphorylase_d"/>
</dbReference>
<dbReference type="InterPro" id="IPR035994">
    <property type="entry name" value="Nucleoside_phosphorylase_sf"/>
</dbReference>
<dbReference type="NCBIfam" id="TIGR03664">
    <property type="entry name" value="fut_nucase"/>
    <property type="match status" value="1"/>
</dbReference>
<dbReference type="PANTHER" id="PTHR46832">
    <property type="entry name" value="5'-METHYLTHIOADENOSINE/S-ADENOSYLHOMOCYSTEINE NUCLEOSIDASE"/>
    <property type="match status" value="1"/>
</dbReference>
<dbReference type="PANTHER" id="PTHR46832:SF2">
    <property type="entry name" value="FUTALOSINE HYDROLASE"/>
    <property type="match status" value="1"/>
</dbReference>
<dbReference type="Pfam" id="PF01048">
    <property type="entry name" value="PNP_UDP_1"/>
    <property type="match status" value="1"/>
</dbReference>
<dbReference type="SUPFAM" id="SSF53167">
    <property type="entry name" value="Purine and uridine phosphorylases"/>
    <property type="match status" value="1"/>
</dbReference>
<gene>
    <name evidence="1" type="primary">mqnB</name>
    <name type="ordered locus">TTHA0556</name>
</gene>
<keyword id="KW-0378">Hydrolase</keyword>
<keyword id="KW-0474">Menaquinone biosynthesis</keyword>
<keyword id="KW-1185">Reference proteome</keyword>
<reference key="1">
    <citation type="journal article" date="2008" name="Science">
        <title>An alternative menaquinone biosynthetic pathway operating in microorganisms.</title>
        <authorList>
            <person name="Hiratsuka T."/>
            <person name="Furihata K."/>
            <person name="Ishikawa J."/>
            <person name="Yamashita H."/>
            <person name="Itoh N."/>
            <person name="Seto H."/>
            <person name="Dairi T."/>
        </authorList>
    </citation>
    <scope>NUCLEOTIDE SEQUENCE [GENOMIC DNA]</scope>
    <scope>FUNCTION</scope>
    <scope>CATALYTIC ACTIVITY</scope>
    <source>
        <strain>ATCC 27634 / DSM 579 / HB8</strain>
    </source>
</reference>
<reference key="2">
    <citation type="submission" date="2004-11" db="EMBL/GenBank/DDBJ databases">
        <title>Complete genome sequence of Thermus thermophilus HB8.</title>
        <authorList>
            <person name="Masui R."/>
            <person name="Kurokawa K."/>
            <person name="Nakagawa N."/>
            <person name="Tokunaga F."/>
            <person name="Koyama Y."/>
            <person name="Shibata T."/>
            <person name="Oshima T."/>
            <person name="Yokoyama S."/>
            <person name="Yasunaga T."/>
            <person name="Kuramitsu S."/>
        </authorList>
    </citation>
    <scope>NUCLEOTIDE SEQUENCE [LARGE SCALE GENOMIC DNA]</scope>
    <source>
        <strain>ATCC 27634 / DSM 579 / HB8</strain>
    </source>
</reference>
<reference key="3">
    <citation type="journal article" date="2009" name="Biosci. Biotechnol. Biochem.">
        <title>Enzymatic properties of futalosine hydrolase, an enzyme essential to a newly identified menaquinone biosynthetic pathway.</title>
        <authorList>
            <person name="Hiratsuka T."/>
            <person name="Itoh N."/>
            <person name="Seto H."/>
            <person name="Dairi T."/>
        </authorList>
    </citation>
    <scope>FUNCTION</scope>
    <scope>CATALYTIC ACTIVITY</scope>
    <scope>SUBSTRATE SPECIFICITY</scope>
    <scope>ACTIVITY REGULATION</scope>
    <scope>BIOPHYSICOCHEMICAL PROPERTIES</scope>
    <scope>PATHWAY</scope>
    <scope>SUBUNIT</scope>
</reference>
<reference key="4">
    <citation type="journal article" date="2011" name="Antimicrob. Agents Chemother.">
        <title>Diversity of the early step of the futalosine pathway.</title>
        <authorList>
            <person name="Arakawa C."/>
            <person name="Kuratsu M."/>
            <person name="Furihata K."/>
            <person name="Hiratsuka T."/>
            <person name="Itoh N."/>
            <person name="Seto H."/>
            <person name="Dairi T."/>
        </authorList>
    </citation>
    <scope>SUBSTRATE SPECIFICITY</scope>
</reference>
<proteinExistence type="evidence at protein level"/>
<sequence>MWLLLSPTRLEAPFLEGEPFAFLAWRGLKGTGFVYLETGIGKVNAAMALAAYAARNPVEKALLFGLAGAYPGGPSLGEAVLVEEEVEADLGLKEGLAPLGFPALALGERRYFNRFPLDPGLTGELARGLGLKVAVGLTRDLVSETPEEALALARRWGASLENMEGAAFARACLALGVRGAELRALSNPAGVRDKAHWRTKEALSALARAVRRLLAEEGGARRPPG</sequence>